<proteinExistence type="evidence at transcript level"/>
<keyword id="KW-0507">mRNA processing</keyword>
<keyword id="KW-0539">Nucleus</keyword>
<keyword id="KW-1185">Reference proteome</keyword>
<keyword id="KW-0687">Ribonucleoprotein</keyword>
<keyword id="KW-0694">RNA-binding</keyword>
<accession>P09406</accession>
<feature type="chain" id="PRO_0000081882" description="U1 small nuclear ribonucleoprotein 70 kDa">
    <location>
        <begin position="1"/>
        <end position="471"/>
    </location>
</feature>
<feature type="domain" description="RRM" evidence="3">
    <location>
        <begin position="103"/>
        <end position="184"/>
    </location>
</feature>
<feature type="region of interest" description="Disordered" evidence="4">
    <location>
        <begin position="48"/>
        <end position="78"/>
    </location>
</feature>
<feature type="region of interest" description="Required for interaction with U1 RNA" evidence="1">
    <location>
        <begin position="92"/>
        <end position="205"/>
    </location>
</feature>
<feature type="region of interest" description="Disordered" evidence="4">
    <location>
        <begin position="190"/>
        <end position="471"/>
    </location>
</feature>
<feature type="compositionally biased region" description="Basic and acidic residues" evidence="4">
    <location>
        <begin position="60"/>
        <end position="78"/>
    </location>
</feature>
<feature type="compositionally biased region" description="Gly residues" evidence="4">
    <location>
        <begin position="195"/>
        <end position="204"/>
    </location>
</feature>
<feature type="compositionally biased region" description="Basic and acidic residues" evidence="4">
    <location>
        <begin position="210"/>
        <end position="246"/>
    </location>
</feature>
<feature type="compositionally biased region" description="Basic residues" evidence="4">
    <location>
        <begin position="247"/>
        <end position="261"/>
    </location>
</feature>
<feature type="compositionally biased region" description="Basic and acidic residues" evidence="4">
    <location>
        <begin position="262"/>
        <end position="288"/>
    </location>
</feature>
<feature type="compositionally biased region" description="Basic residues" evidence="4">
    <location>
        <begin position="289"/>
        <end position="298"/>
    </location>
</feature>
<feature type="compositionally biased region" description="Basic and acidic residues" evidence="4">
    <location>
        <begin position="299"/>
        <end position="316"/>
    </location>
</feature>
<feature type="compositionally biased region" description="Acidic residues" evidence="4">
    <location>
        <begin position="317"/>
        <end position="326"/>
    </location>
</feature>
<feature type="compositionally biased region" description="Basic and acidic residues" evidence="4">
    <location>
        <begin position="339"/>
        <end position="428"/>
    </location>
</feature>
<organism>
    <name type="scientific">Xenopus laevis</name>
    <name type="common">African clawed frog</name>
    <dbReference type="NCBI Taxonomy" id="8355"/>
    <lineage>
        <taxon>Eukaryota</taxon>
        <taxon>Metazoa</taxon>
        <taxon>Chordata</taxon>
        <taxon>Craniata</taxon>
        <taxon>Vertebrata</taxon>
        <taxon>Euteleostomi</taxon>
        <taxon>Amphibia</taxon>
        <taxon>Batrachia</taxon>
        <taxon>Anura</taxon>
        <taxon>Pipoidea</taxon>
        <taxon>Pipidae</taxon>
        <taxon>Xenopodinae</taxon>
        <taxon>Xenopus</taxon>
        <taxon>Xenopus</taxon>
    </lineage>
</organism>
<comment type="function">
    <text evidence="1">Component of the spliceosomal U1 snRNP, which is essential for recognition of the pre-mRNA 5' splice-site and the subsequent assembly of the spliceosome. snrnp70 binds to the loop I region of U1-snRNA.</text>
</comment>
<comment type="subunit">
    <text evidence="1">Component of the U1 snRNP. The U1 snRNP is composed of the U1 snRNA and the 7 core Sm proteins snrpb, snrpd1, snrpd2, snrpd3, snrpe, snrpf and snrpg that assemble in a heptameric protein ring on the Sm site of the small nuclear RNA to form the core snRNP, and at least three U1 snRNP-specific proteins snrnp70/U1-70K, snrpa/U1-A and snrpc/U1-C.</text>
</comment>
<comment type="subcellular location">
    <subcellularLocation>
        <location evidence="2">Nucleus speckle</location>
    </subcellularLocation>
    <subcellularLocation>
        <location evidence="2">Nucleus</location>
        <location evidence="2">Nucleoplasm</location>
    </subcellularLocation>
</comment>
<comment type="domain">
    <text evidence="1">The RRM domain mediates interaction with U1 RNA.</text>
</comment>
<sequence length="471" mass="57204">MTQFLPPNLLALFAPRDPVPYLPPLDKLPHEKHHNQPYCGIAPYIREFEDPRDAPPPTRAETREERMERKRREKIERRQQDVENELKIWDPHNDQNAQGDAFKTLFVARVNYDTTESKLRREFEVYGPIKRIHIVYNKGSEGSGKPRGYAFIEYEHERDMHSAYKHADGKKIDGRRVLVDVERGRTVKGWRPRRLGGGLGGTRRGGADVNIRHSGRDDTSRYDERDRERERDRRERSREREKEPRERRRSRSRERRRKSRSREKEERKRTREKSKDKDKEKDKDNKDRDRKRRSRSRERKRERDRDREKKEERVEAEVPEADDAPQDDAQIGDLGIDGIELKQEPEEKSRERDRERDRDREKGEKDRDKDRDRDRDRRRSHRDRDREKDRDRDRDRRRDRDRDRERDKDHKRERDRGDRSEKREERVPDNGMVMEQAEETSQDMYLDQESMQSGDGYLSTENGYMMEPPME</sequence>
<dbReference type="EMBL" id="X12430">
    <property type="protein sequence ID" value="CAA30972.1"/>
    <property type="molecule type" value="mRNA"/>
</dbReference>
<dbReference type="PIR" id="S02016">
    <property type="entry name" value="S02016"/>
</dbReference>
<dbReference type="SMR" id="P09406"/>
<dbReference type="AGR" id="Xenbase:XB-GENE-992825"/>
<dbReference type="Xenbase" id="XB-GENE-992825">
    <property type="gene designation" value="snrnp70.L"/>
</dbReference>
<dbReference type="Proteomes" id="UP000186698">
    <property type="component" value="Unplaced"/>
</dbReference>
<dbReference type="GO" id="GO:0016607">
    <property type="term" value="C:nuclear speck"/>
    <property type="evidence" value="ECO:0000250"/>
    <property type="project" value="UniProtKB"/>
</dbReference>
<dbReference type="GO" id="GO:0005634">
    <property type="term" value="C:nucleus"/>
    <property type="evidence" value="ECO:0000250"/>
    <property type="project" value="UniProtKB"/>
</dbReference>
<dbReference type="GO" id="GO:0071011">
    <property type="term" value="C:precatalytic spliceosome"/>
    <property type="evidence" value="ECO:0007669"/>
    <property type="project" value="TreeGrafter"/>
</dbReference>
<dbReference type="GO" id="GO:0005681">
    <property type="term" value="C:spliceosomal complex"/>
    <property type="evidence" value="ECO:0000250"/>
    <property type="project" value="UniProtKB"/>
</dbReference>
<dbReference type="GO" id="GO:0005685">
    <property type="term" value="C:U1 snRNP"/>
    <property type="evidence" value="ECO:0000250"/>
    <property type="project" value="UniProtKB"/>
</dbReference>
<dbReference type="GO" id="GO:0071004">
    <property type="term" value="C:U2-type prespliceosome"/>
    <property type="evidence" value="ECO:0000318"/>
    <property type="project" value="GO_Central"/>
</dbReference>
<dbReference type="GO" id="GO:0003729">
    <property type="term" value="F:mRNA binding"/>
    <property type="evidence" value="ECO:0000318"/>
    <property type="project" value="GO_Central"/>
</dbReference>
<dbReference type="GO" id="GO:0003723">
    <property type="term" value="F:RNA binding"/>
    <property type="evidence" value="ECO:0000250"/>
    <property type="project" value="UniProtKB"/>
</dbReference>
<dbReference type="GO" id="GO:0030619">
    <property type="term" value="F:U1 snRNA binding"/>
    <property type="evidence" value="ECO:0000250"/>
    <property type="project" value="UniProtKB"/>
</dbReference>
<dbReference type="GO" id="GO:0000398">
    <property type="term" value="P:mRNA splicing, via spliceosome"/>
    <property type="evidence" value="ECO:0000250"/>
    <property type="project" value="UniProtKB"/>
</dbReference>
<dbReference type="GO" id="GO:0043484">
    <property type="term" value="P:regulation of RNA splicing"/>
    <property type="evidence" value="ECO:0000250"/>
    <property type="project" value="UniProtKB"/>
</dbReference>
<dbReference type="CDD" id="cd12236">
    <property type="entry name" value="RRM_snRNP70"/>
    <property type="match status" value="1"/>
</dbReference>
<dbReference type="FunFam" id="3.30.70.330:FF:000153">
    <property type="entry name" value="U1 small nuclear ribonucleoprotein 70 kDa"/>
    <property type="match status" value="1"/>
</dbReference>
<dbReference type="Gene3D" id="3.30.70.330">
    <property type="match status" value="1"/>
</dbReference>
<dbReference type="InterPro" id="IPR012677">
    <property type="entry name" value="Nucleotide-bd_a/b_plait_sf"/>
</dbReference>
<dbReference type="InterPro" id="IPR035979">
    <property type="entry name" value="RBD_domain_sf"/>
</dbReference>
<dbReference type="InterPro" id="IPR000504">
    <property type="entry name" value="RRM_dom"/>
</dbReference>
<dbReference type="InterPro" id="IPR034143">
    <property type="entry name" value="snRNP70_RRM"/>
</dbReference>
<dbReference type="InterPro" id="IPR051183">
    <property type="entry name" value="U1_U11-U12_snRNP_70-35kDa"/>
</dbReference>
<dbReference type="InterPro" id="IPR022023">
    <property type="entry name" value="U1snRNP70_N"/>
</dbReference>
<dbReference type="PANTHER" id="PTHR13952">
    <property type="entry name" value="U1 SMALL NUCLEAR RIBONUCLEOPROTEIN 70 KD"/>
    <property type="match status" value="1"/>
</dbReference>
<dbReference type="PANTHER" id="PTHR13952:SF5">
    <property type="entry name" value="U1 SMALL NUCLEAR RIBONUCLEOPROTEIN 70 KDA"/>
    <property type="match status" value="1"/>
</dbReference>
<dbReference type="Pfam" id="PF00076">
    <property type="entry name" value="RRM_1"/>
    <property type="match status" value="1"/>
</dbReference>
<dbReference type="Pfam" id="PF12220">
    <property type="entry name" value="U1snRNP70_N"/>
    <property type="match status" value="1"/>
</dbReference>
<dbReference type="SMART" id="SM00360">
    <property type="entry name" value="RRM"/>
    <property type="match status" value="1"/>
</dbReference>
<dbReference type="SUPFAM" id="SSF54928">
    <property type="entry name" value="RNA-binding domain, RBD"/>
    <property type="match status" value="1"/>
</dbReference>
<dbReference type="PROSITE" id="PS50102">
    <property type="entry name" value="RRM"/>
    <property type="match status" value="1"/>
</dbReference>
<gene>
    <name type="primary">snrnp70</name>
    <name type="synonym">snrp70</name>
</gene>
<protein>
    <recommendedName>
        <fullName>U1 small nuclear ribonucleoprotein 70 kDa</fullName>
        <shortName>U1 snRNP 70 kDa</shortName>
        <shortName>U1-70K</shortName>
        <shortName>snRNP70</shortName>
    </recommendedName>
</protein>
<name>RU17_XENLA</name>
<reference key="1">
    <citation type="journal article" date="1988" name="EMBO J.">
        <title>Structure and expression of a Xenopus gene encoding an snRNP protein (U1 70K).</title>
        <authorList>
            <person name="Etzerodt M."/>
            <person name="Vignali R."/>
            <person name="Scherly D."/>
            <person name="Mattaj I.W."/>
            <person name="Ciliberto G."/>
            <person name="Philipson L."/>
        </authorList>
    </citation>
    <scope>NUCLEOTIDE SEQUENCE [MRNA]</scope>
</reference>
<evidence type="ECO:0000250" key="1">
    <source>
        <dbReference type="UniProtKB" id="P08621"/>
    </source>
</evidence>
<evidence type="ECO:0000250" key="2">
    <source>
        <dbReference type="UniProtKB" id="Q62376"/>
    </source>
</evidence>
<evidence type="ECO:0000255" key="3">
    <source>
        <dbReference type="PROSITE-ProRule" id="PRU00176"/>
    </source>
</evidence>
<evidence type="ECO:0000256" key="4">
    <source>
        <dbReference type="SAM" id="MobiDB-lite"/>
    </source>
</evidence>